<accession>Q9CL49</accession>
<keyword id="KW-1185">Reference proteome</keyword>
<keyword id="KW-0687">Ribonucleoprotein</keyword>
<keyword id="KW-0689">Ribosomal protein</keyword>
<keyword id="KW-0694">RNA-binding</keyword>
<keyword id="KW-0699">rRNA-binding</keyword>
<gene>
    <name evidence="1" type="primary">rplO</name>
    <name type="synonym">rpl15</name>
    <name type="ordered locus">PM1396</name>
</gene>
<feature type="chain" id="PRO_0000104774" description="Large ribosomal subunit protein uL15">
    <location>
        <begin position="1"/>
        <end position="144"/>
    </location>
</feature>
<feature type="region of interest" description="Disordered" evidence="2">
    <location>
        <begin position="1"/>
        <end position="53"/>
    </location>
</feature>
<feature type="compositionally biased region" description="Gly residues" evidence="2">
    <location>
        <begin position="21"/>
        <end position="31"/>
    </location>
</feature>
<name>RL15_PASMU</name>
<protein>
    <recommendedName>
        <fullName evidence="1">Large ribosomal subunit protein uL15</fullName>
    </recommendedName>
    <alternativeName>
        <fullName evidence="3">50S ribosomal protein L15</fullName>
    </alternativeName>
</protein>
<proteinExistence type="inferred from homology"/>
<sequence length="144" mass="14923">MRLNTLSPAEGAKHSAKRLGRGIGSGLGKTGGRGHKGQKSRTGGGVRRGFEGGQMPLYRRLPKFGFTSMKAAVTAEVRLNDLAKVEGGVVTLESLKAANVITKDIQFVKIILAGEVKGAVVVRGLRVTKGAKAAIEAAGGSVEE</sequence>
<organism>
    <name type="scientific">Pasteurella multocida (strain Pm70)</name>
    <dbReference type="NCBI Taxonomy" id="272843"/>
    <lineage>
        <taxon>Bacteria</taxon>
        <taxon>Pseudomonadati</taxon>
        <taxon>Pseudomonadota</taxon>
        <taxon>Gammaproteobacteria</taxon>
        <taxon>Pasteurellales</taxon>
        <taxon>Pasteurellaceae</taxon>
        <taxon>Pasteurella</taxon>
    </lineage>
</organism>
<comment type="function">
    <text evidence="1">Binds to the 23S rRNA.</text>
</comment>
<comment type="subunit">
    <text evidence="1">Part of the 50S ribosomal subunit.</text>
</comment>
<comment type="similarity">
    <text evidence="1">Belongs to the universal ribosomal protein uL15 family.</text>
</comment>
<reference key="1">
    <citation type="journal article" date="2001" name="Proc. Natl. Acad. Sci. U.S.A.">
        <title>Complete genomic sequence of Pasteurella multocida Pm70.</title>
        <authorList>
            <person name="May B.J."/>
            <person name="Zhang Q."/>
            <person name="Li L.L."/>
            <person name="Paustian M.L."/>
            <person name="Whittam T.S."/>
            <person name="Kapur V."/>
        </authorList>
    </citation>
    <scope>NUCLEOTIDE SEQUENCE [LARGE SCALE GENOMIC DNA]</scope>
    <source>
        <strain>Pm70</strain>
    </source>
</reference>
<evidence type="ECO:0000255" key="1">
    <source>
        <dbReference type="HAMAP-Rule" id="MF_01341"/>
    </source>
</evidence>
<evidence type="ECO:0000256" key="2">
    <source>
        <dbReference type="SAM" id="MobiDB-lite"/>
    </source>
</evidence>
<evidence type="ECO:0000305" key="3"/>
<dbReference type="EMBL" id="AE004439">
    <property type="protein sequence ID" value="AAK03480.1"/>
    <property type="molecule type" value="Genomic_DNA"/>
</dbReference>
<dbReference type="RefSeq" id="WP_005717914.1">
    <property type="nucleotide sequence ID" value="NC_002663.1"/>
</dbReference>
<dbReference type="SMR" id="Q9CL49"/>
<dbReference type="STRING" id="272843.PM1396"/>
<dbReference type="EnsemblBacteria" id="AAK03480">
    <property type="protein sequence ID" value="AAK03480"/>
    <property type="gene ID" value="PM1396"/>
</dbReference>
<dbReference type="GeneID" id="77207045"/>
<dbReference type="KEGG" id="pmu:PM1396"/>
<dbReference type="HOGENOM" id="CLU_055188_4_2_6"/>
<dbReference type="OrthoDB" id="9810293at2"/>
<dbReference type="Proteomes" id="UP000000809">
    <property type="component" value="Chromosome"/>
</dbReference>
<dbReference type="GO" id="GO:0022625">
    <property type="term" value="C:cytosolic large ribosomal subunit"/>
    <property type="evidence" value="ECO:0007669"/>
    <property type="project" value="TreeGrafter"/>
</dbReference>
<dbReference type="GO" id="GO:0019843">
    <property type="term" value="F:rRNA binding"/>
    <property type="evidence" value="ECO:0007669"/>
    <property type="project" value="UniProtKB-UniRule"/>
</dbReference>
<dbReference type="GO" id="GO:0003735">
    <property type="term" value="F:structural constituent of ribosome"/>
    <property type="evidence" value="ECO:0007669"/>
    <property type="project" value="InterPro"/>
</dbReference>
<dbReference type="GO" id="GO:0006412">
    <property type="term" value="P:translation"/>
    <property type="evidence" value="ECO:0007669"/>
    <property type="project" value="UniProtKB-UniRule"/>
</dbReference>
<dbReference type="Gene3D" id="3.100.10.10">
    <property type="match status" value="1"/>
</dbReference>
<dbReference type="HAMAP" id="MF_01341">
    <property type="entry name" value="Ribosomal_uL15"/>
    <property type="match status" value="1"/>
</dbReference>
<dbReference type="InterPro" id="IPR030878">
    <property type="entry name" value="Ribosomal_uL15"/>
</dbReference>
<dbReference type="InterPro" id="IPR021131">
    <property type="entry name" value="Ribosomal_uL15/eL18"/>
</dbReference>
<dbReference type="InterPro" id="IPR036227">
    <property type="entry name" value="Ribosomal_uL15/eL18_sf"/>
</dbReference>
<dbReference type="InterPro" id="IPR005749">
    <property type="entry name" value="Ribosomal_uL15_bac-type"/>
</dbReference>
<dbReference type="InterPro" id="IPR001196">
    <property type="entry name" value="Ribosomal_uL15_CS"/>
</dbReference>
<dbReference type="NCBIfam" id="TIGR01071">
    <property type="entry name" value="rplO_bact"/>
    <property type="match status" value="1"/>
</dbReference>
<dbReference type="PANTHER" id="PTHR12934">
    <property type="entry name" value="50S RIBOSOMAL PROTEIN L15"/>
    <property type="match status" value="1"/>
</dbReference>
<dbReference type="PANTHER" id="PTHR12934:SF11">
    <property type="entry name" value="LARGE RIBOSOMAL SUBUNIT PROTEIN UL15M"/>
    <property type="match status" value="1"/>
</dbReference>
<dbReference type="Pfam" id="PF00828">
    <property type="entry name" value="Ribosomal_L27A"/>
    <property type="match status" value="1"/>
</dbReference>
<dbReference type="SUPFAM" id="SSF52080">
    <property type="entry name" value="Ribosomal proteins L15p and L18e"/>
    <property type="match status" value="1"/>
</dbReference>
<dbReference type="PROSITE" id="PS00475">
    <property type="entry name" value="RIBOSOMAL_L15"/>
    <property type="match status" value="1"/>
</dbReference>